<name>COLI1_ONCMY</name>
<organism>
    <name type="scientific">Oncorhynchus mykiss</name>
    <name type="common">Rainbow trout</name>
    <name type="synonym">Salmo gairdneri</name>
    <dbReference type="NCBI Taxonomy" id="8022"/>
    <lineage>
        <taxon>Eukaryota</taxon>
        <taxon>Metazoa</taxon>
        <taxon>Chordata</taxon>
        <taxon>Craniata</taxon>
        <taxon>Vertebrata</taxon>
        <taxon>Euteleostomi</taxon>
        <taxon>Actinopterygii</taxon>
        <taxon>Neopterygii</taxon>
        <taxon>Teleostei</taxon>
        <taxon>Protacanthopterygii</taxon>
        <taxon>Salmoniformes</taxon>
        <taxon>Salmonidae</taxon>
        <taxon>Salmoninae</taxon>
        <taxon>Oncorhynchus</taxon>
    </lineage>
</organism>
<sequence length="253" mass="28559">MLCPAWLLAVAVVGVVRGVKGQCWENPRCHDLSSENNLLECIQLCRSDLTTKSPIFPVKVHLQPPSPSDSDSPPLYLPLSLLSPSSPLYPTEQQNSVSPQAKRSYSMEHFRWGKPVGRKRRPVKVYTNGVEEESSEAFPSEMRRELGTDDAVYPSLEAGTAEGGEAEGMEGVFSLQEKKDGSYKMNHFRWSGPPASKRYGGFMKSWDERSQKPLLTLFKNVIIKDGQQKREQWGREEGEEKRALGERKYHFQG</sequence>
<dbReference type="EMBL" id="X69808">
    <property type="protein sequence ID" value="CAA49466.1"/>
    <property type="molecule type" value="mRNA"/>
</dbReference>
<dbReference type="PIR" id="A45359">
    <property type="entry name" value="A45359"/>
</dbReference>
<dbReference type="RefSeq" id="NP_001118190.1">
    <property type="nucleotide sequence ID" value="NM_001124718.1"/>
</dbReference>
<dbReference type="Ensembl" id="ENSOMYT00000033728.2">
    <property type="protein sequence ID" value="ENSOMYP00000030934.2"/>
    <property type="gene ID" value="ENSOMYG00000014502.2"/>
</dbReference>
<dbReference type="GeneID" id="100136771"/>
<dbReference type="KEGG" id="omy:100136771"/>
<dbReference type="GeneTree" id="ENSGT00390000016811"/>
<dbReference type="OrthoDB" id="8962839at2759"/>
<dbReference type="Proteomes" id="UP000694395">
    <property type="component" value="Chromosome 19"/>
</dbReference>
<dbReference type="GO" id="GO:0005576">
    <property type="term" value="C:extracellular region"/>
    <property type="evidence" value="ECO:0007669"/>
    <property type="project" value="UniProtKB-SubCell"/>
</dbReference>
<dbReference type="GO" id="GO:0005184">
    <property type="term" value="F:neuropeptide hormone activity"/>
    <property type="evidence" value="ECO:0007669"/>
    <property type="project" value="TreeGrafter"/>
</dbReference>
<dbReference type="GO" id="GO:0007218">
    <property type="term" value="P:neuropeptide signaling pathway"/>
    <property type="evidence" value="ECO:0007669"/>
    <property type="project" value="UniProtKB-KW"/>
</dbReference>
<dbReference type="InterPro" id="IPR013531">
    <property type="entry name" value="Mcrtin_ACTH_cent"/>
</dbReference>
<dbReference type="InterPro" id="IPR013593">
    <property type="entry name" value="Melanocortin_N"/>
</dbReference>
<dbReference type="InterPro" id="IPR013532">
    <property type="entry name" value="Opioid_neuropept"/>
</dbReference>
<dbReference type="InterPro" id="IPR001941">
    <property type="entry name" value="PMOC"/>
</dbReference>
<dbReference type="InterPro" id="IPR050878">
    <property type="entry name" value="POMC-derived_peptides"/>
</dbReference>
<dbReference type="PANTHER" id="PTHR11416">
    <property type="entry name" value="PRO-OPIOMELANOCORTIN"/>
    <property type="match status" value="1"/>
</dbReference>
<dbReference type="PANTHER" id="PTHR11416:SF7">
    <property type="entry name" value="PRO-OPIOMELANOCORTIN"/>
    <property type="match status" value="1"/>
</dbReference>
<dbReference type="Pfam" id="PF00976">
    <property type="entry name" value="ACTH_domain"/>
    <property type="match status" value="2"/>
</dbReference>
<dbReference type="Pfam" id="PF08384">
    <property type="entry name" value="NPP"/>
    <property type="match status" value="1"/>
</dbReference>
<dbReference type="Pfam" id="PF08035">
    <property type="entry name" value="Op_neuropeptide"/>
    <property type="match status" value="1"/>
</dbReference>
<dbReference type="PRINTS" id="PR00383">
    <property type="entry name" value="MELANOCORTIN"/>
</dbReference>
<dbReference type="SMART" id="SM01363">
    <property type="entry name" value="ACTH_domain"/>
    <property type="match status" value="2"/>
</dbReference>
<dbReference type="SMART" id="SM01364">
    <property type="entry name" value="NPP"/>
    <property type="match status" value="1"/>
</dbReference>
<dbReference type="SMART" id="SM01365">
    <property type="entry name" value="Op_neuropeptide"/>
    <property type="match status" value="1"/>
</dbReference>
<accession>Q04617</accession>
<protein>
    <recommendedName>
        <fullName>Pro-opiomelanocortin A</fullName>
        <shortName>POMC-A</shortName>
    </recommendedName>
    <alternativeName>
        <fullName>Corticotropin-lipotropin A</fullName>
    </alternativeName>
    <component>
        <recommendedName>
            <fullName>NPP 1</fullName>
        </recommendedName>
    </component>
    <component>
        <recommendedName>
            <fullName>Corticotropin</fullName>
        </recommendedName>
        <alternativeName>
            <fullName>Adrenocorticotropic hormone</fullName>
            <shortName>ACTH</shortName>
        </alternativeName>
    </component>
    <component>
        <recommendedName>
            <fullName>Melanocyte-stimulating hormone alpha 1</fullName>
            <shortName>Alpha-MSH 1</shortName>
        </recommendedName>
        <alternativeName>
            <fullName>Melanotropin alpha 1</fullName>
        </alternativeName>
    </component>
    <component>
        <recommendedName>
            <fullName>Corticotropin-like intermediary peptide 1</fullName>
            <shortName>CLIP-1</shortName>
        </recommendedName>
    </component>
    <component>
        <recommendedName>
            <fullName>Lipotropin beta</fullName>
        </recommendedName>
        <alternativeName>
            <fullName>Beta-LPH</fullName>
        </alternativeName>
    </component>
    <component>
        <recommendedName>
            <fullName>Lipotropin gamma</fullName>
        </recommendedName>
        <alternativeName>
            <fullName>Gamma-LPH</fullName>
        </alternativeName>
    </component>
    <component>
        <recommendedName>
            <fullName>Melanocyte-stimulating hormone beta 1</fullName>
            <shortName>Beta-MSH 1</shortName>
        </recommendedName>
        <alternativeName>
            <fullName>Melanotropin beta 1</fullName>
        </alternativeName>
    </component>
    <component>
        <recommendedName>
            <fullName>Beta-endorphin 1</fullName>
        </recommendedName>
    </component>
    <component>
        <recommendedName>
            <fullName>Met-enkephalin</fullName>
        </recommendedName>
    </component>
    <component>
        <recommendedName>
            <fullName>C-terminal peptide 1</fullName>
        </recommendedName>
    </component>
    <component>
        <recommendedName>
            <fullName>C-terminal peptide 2</fullName>
        </recommendedName>
    </component>
</protein>
<feature type="signal peptide" evidence="3">
    <location>
        <begin position="1"/>
        <end position="21"/>
    </location>
</feature>
<feature type="peptide" id="PRO_0000025093" description="NPP 1" evidence="1">
    <location>
        <begin position="22"/>
        <end position="101"/>
    </location>
</feature>
<feature type="peptide" id="PRO_0000025094" description="Corticotropin" evidence="1">
    <location>
        <begin position="104"/>
        <end position="142"/>
    </location>
</feature>
<feature type="peptide" id="PRO_0000025095" description="Melanocyte-stimulating hormone alpha 1" evidence="1">
    <location>
        <begin position="104"/>
        <end position="116"/>
    </location>
</feature>
<feature type="peptide" id="PRO_0000025096" description="Corticotropin-like intermediary peptide 1" evidence="1">
    <location>
        <begin position="122"/>
        <end position="142"/>
    </location>
</feature>
<feature type="peptide" id="PRO_0000025097" description="Lipotropin beta" evidence="1">
    <location>
        <begin position="145"/>
        <end position="228"/>
    </location>
</feature>
<feature type="peptide" id="PRO_0000025098" description="Lipotropin gamma" evidence="1">
    <location>
        <begin position="145"/>
        <end position="196"/>
    </location>
</feature>
<feature type="peptide" id="PRO_0000025099" description="Melanocyte-stimulating hormone beta 1" evidence="1">
    <location>
        <begin position="180"/>
        <end position="196"/>
    </location>
</feature>
<feature type="peptide" id="PRO_0000025100" description="Beta-endorphin 1" evidence="1">
    <location>
        <begin position="199"/>
        <end position="228"/>
    </location>
</feature>
<feature type="peptide" id="PRO_0000025101" description="Met-enkephalin" evidence="1">
    <location>
        <begin position="199"/>
        <end position="203"/>
    </location>
</feature>
<feature type="peptide" id="PRO_0000411981" description="C-terminal peptide 1">
    <location>
        <begin position="231"/>
        <end position="240"/>
    </location>
</feature>
<feature type="peptide" id="PRO_0000411982" description="C-terminal peptide 2">
    <location>
        <begin position="243"/>
        <end position="252"/>
    </location>
</feature>
<feature type="region of interest" description="Disordered" evidence="4">
    <location>
        <begin position="228"/>
        <end position="253"/>
    </location>
</feature>
<feature type="modified residue" description="Pyrrolidone carboxylic acid" evidence="1">
    <location>
        <position position="22"/>
    </location>
</feature>
<feature type="modified residue" description="N-acetylserine; in Corticotropin" evidence="1">
    <location>
        <position position="104"/>
    </location>
</feature>
<feature type="modified residue" description="Valine amide" evidence="1">
    <location>
        <position position="116"/>
    </location>
</feature>
<feature type="modified residue" description="Glutamine amide; partial" evidence="6 7">
    <location>
        <position position="252"/>
    </location>
</feature>
<feature type="disulfide bond" evidence="1">
    <location>
        <begin position="23"/>
        <end position="45"/>
    </location>
</feature>
<feature type="disulfide bond" evidence="1">
    <location>
        <begin position="29"/>
        <end position="41"/>
    </location>
</feature>
<gene>
    <name type="primary">pomca</name>
</gene>
<keyword id="KW-0007">Acetylation</keyword>
<keyword id="KW-0027">Amidation</keyword>
<keyword id="KW-0165">Cleavage on pair of basic residues</keyword>
<keyword id="KW-0903">Direct protein sequencing</keyword>
<keyword id="KW-1015">Disulfide bond</keyword>
<keyword id="KW-0257">Endorphin</keyword>
<keyword id="KW-0372">Hormone</keyword>
<keyword id="KW-0873">Pyrrolidone carboxylic acid</keyword>
<keyword id="KW-0964">Secreted</keyword>
<keyword id="KW-0732">Signal</keyword>
<reference key="1">
    <citation type="journal article" date="1992" name="Mol. Endocrinol.">
        <title>One of the two trout proopiomelanocortin messenger RNAs potentially encodes new peptides.</title>
        <authorList>
            <person name="Salbert G."/>
            <person name="Chauveau I."/>
            <person name="Bonnec G."/>
            <person name="Valotaire Y."/>
            <person name="Jego P."/>
        </authorList>
    </citation>
    <scope>NUCLEOTIDE SEQUENCE [MRNA]</scope>
    <source>
        <tissue>Pituitary</tissue>
    </source>
</reference>
<reference key="2">
    <citation type="journal article" date="1997" name="Biochem. Biophys. Res. Commun.">
        <title>Isolation and structural characterization of two novel peptides derived from proopiomelanocortin in the pituitary of the rainbow trout.</title>
        <authorList>
            <person name="Tollemer H."/>
            <person name="Leprince J."/>
            <person name="Galas L."/>
            <person name="Vandesande F."/>
            <person name="Mevel J.C."/>
            <person name="Tonon M.C."/>
            <person name="Conlon J.M."/>
            <person name="Vaudry H."/>
        </authorList>
    </citation>
    <scope>PROTEIN SEQUENCE OF 231-240 AND 243-252</scope>
    <scope>AMIDATION AT GLN-252</scope>
    <scope>MASS SPECTROMETRY</scope>
    <source>
        <tissue>Pituitary</tissue>
    </source>
</reference>
<reference key="3">
    <citation type="journal article" date="1997" name="Endocrinology">
        <title>Characterization of a novel alpha-amidated decapeptide derived from proopiomelanocortin-A in the trout pituitary.</title>
        <authorList>
            <person name="Tollemer H."/>
            <person name="Leprince J."/>
            <person name="Bailhache T."/>
            <person name="Chauveau I."/>
            <person name="Vandesande F."/>
            <person name="Tonon M.C."/>
            <person name="Jego P."/>
            <person name="Vaudry H."/>
        </authorList>
    </citation>
    <scope>IDENTIFICATION OF C-TERMINAL PEPTIDES</scope>
    <scope>AMIDATION AT GLN-252</scope>
</reference>
<reference key="4">
    <citation type="journal article" date="1999" name="Cell Tissue Res.">
        <title>Immunohistochemical localization and biochemical characterization of two novel decapeptides derived from POMC-A in the trout hypothalamus.</title>
        <authorList>
            <person name="Tollemer H."/>
            <person name="Teitsma C.A."/>
            <person name="Leprince J."/>
            <person name="Bailhache T."/>
            <person name="Vandesande F."/>
            <person name="Kah O."/>
            <person name="Tonon M.C."/>
            <person name="Vaudry H."/>
        </authorList>
    </citation>
    <scope>TISSUE SPECIFICITY OF C-TERMINAL PEPTIDES</scope>
</reference>
<comment type="function">
    <molecule>Corticotropin</molecule>
    <text>Stimulates the adrenal glands to release cortisol.</text>
</comment>
<comment type="function">
    <text>Melanocyte-stimulating hormone alpha: Anorexigenic peptide. Increases the pigmentation of skin by increasing melanin production in melanocytes.</text>
</comment>
<comment type="function">
    <text>Melanocyte-stimulating hormone beta: Increases the pigmentation of skin by increasing melanin production in melanocytes.</text>
</comment>
<comment type="function">
    <text>Beta-endorphin: Endogenous orexigenic opiate.</text>
</comment>
<comment type="function">
    <molecule>Met-enkephalin</molecule>
    <text>Endogenous opiate.</text>
</comment>
<comment type="subcellular location">
    <subcellularLocation>
        <location evidence="2">Secreted</location>
    </subcellularLocation>
    <text evidence="2">Melanocyte-stimulating hormone alpha and beta-endorphin are stored in separate granules in hypothalamic POMC neurons, suggesting that secretion may be under the control of different regulatory mechanisms.</text>
</comment>
<comment type="tissue specificity">
    <text evidence="5">C-terminal peptide 1 and C-terminal peptide 2 are detected in the anterior part of the nucleus lateralis tuberis of hypothalamus, in dorsal hypothalamus, thalamus, telencephalon, optic tectum and medulla oblongata (at protein level). Expressed in pituitary and hypothalamus of adult diploid animals, and hypothalamus of triploid and ovulated female trout.</text>
</comment>
<comment type="developmental stage">
    <text>Expressed in sexually active or inactive fish.</text>
</comment>
<comment type="PTM">
    <text>Specific enzymatic cleavages at paired basic residues yield the different active peptides.</text>
</comment>
<comment type="PTM">
    <text>Acetylation of beta-endorphin occurs in a tissue-specific manner.</text>
</comment>
<comment type="mass spectrometry" mass="1246.6" method="MALDI" evidence="7">
    <molecule>C-terminal peptide 2</molecule>
</comment>
<comment type="similarity">
    <text evidence="8">Belongs to the POMC family.</text>
</comment>
<proteinExistence type="evidence at protein level"/>
<evidence type="ECO:0000250" key="1"/>
<evidence type="ECO:0000250" key="2">
    <source>
        <dbReference type="UniProtKB" id="P01193"/>
    </source>
</evidence>
<evidence type="ECO:0000255" key="3"/>
<evidence type="ECO:0000256" key="4">
    <source>
        <dbReference type="SAM" id="MobiDB-lite"/>
    </source>
</evidence>
<evidence type="ECO:0000269" key="5">
    <source>
    </source>
</evidence>
<evidence type="ECO:0000269" key="6">
    <source>
    </source>
</evidence>
<evidence type="ECO:0000269" key="7">
    <source>
    </source>
</evidence>
<evidence type="ECO:0000305" key="8"/>